<organism>
    <name type="scientific">Chelativorans sp. (strain BNC1)</name>
    <dbReference type="NCBI Taxonomy" id="266779"/>
    <lineage>
        <taxon>Bacteria</taxon>
        <taxon>Pseudomonadati</taxon>
        <taxon>Pseudomonadota</taxon>
        <taxon>Alphaproteobacteria</taxon>
        <taxon>Hyphomicrobiales</taxon>
        <taxon>Phyllobacteriaceae</taxon>
        <taxon>Chelativorans</taxon>
    </lineage>
</organism>
<keyword id="KW-0067">ATP-binding</keyword>
<keyword id="KW-0963">Cytoplasm</keyword>
<keyword id="KW-0227">DNA damage</keyword>
<keyword id="KW-0233">DNA recombination</keyword>
<keyword id="KW-0234">DNA repair</keyword>
<keyword id="KW-0238">DNA-binding</keyword>
<keyword id="KW-0547">Nucleotide-binding</keyword>
<keyword id="KW-0742">SOS response</keyword>
<proteinExistence type="inferred from homology"/>
<accession>Q11IW6</accession>
<sequence>MAQNTLRLVEENGVDKSKALDAALSQIERAFGKGSIMRLGANDKVVEIETISTGSLGLDIALGVGGLPRGRIIEIYGPESSGKTTLALHTVAEAQKKGGICGFIDAEHALDPVYARKLGVDLENLLISQPDTGEQALEICDTLVRSGAVDVIVVDSVAALTPRAEIEGEMGESLPGMQARLMSQALRKLTASISRSNTMVIFINQIRMKIGVMFGSPETTTGGNALKFYASVRLDIRRIGSVKDREETVGNQTRVKVVKNKMAPPFKQVEFDIMYGEGVSKTGELVDLGVKAGVVEKAGAWFSYNSQRLGQGRENAKLFLRDNPEVAREIELALRQNAGLIAERFLEADKDGSLDDAAES</sequence>
<gene>
    <name evidence="1" type="primary">recA</name>
    <name type="ordered locus">Meso_1263</name>
</gene>
<comment type="function">
    <text evidence="1">Can catalyze the hydrolysis of ATP in the presence of single-stranded DNA, the ATP-dependent uptake of single-stranded DNA by duplex DNA, and the ATP-dependent hybridization of homologous single-stranded DNAs. It interacts with LexA causing its activation and leading to its autocatalytic cleavage.</text>
</comment>
<comment type="subcellular location">
    <subcellularLocation>
        <location evidence="1">Cytoplasm</location>
    </subcellularLocation>
</comment>
<comment type="similarity">
    <text evidence="1">Belongs to the RecA family.</text>
</comment>
<protein>
    <recommendedName>
        <fullName evidence="1">Protein RecA</fullName>
    </recommendedName>
    <alternativeName>
        <fullName evidence="1">Recombinase A</fullName>
    </alternativeName>
</protein>
<evidence type="ECO:0000255" key="1">
    <source>
        <dbReference type="HAMAP-Rule" id="MF_00268"/>
    </source>
</evidence>
<name>RECA_CHESB</name>
<feature type="chain" id="PRO_1000047943" description="Protein RecA">
    <location>
        <begin position="1"/>
        <end position="360"/>
    </location>
</feature>
<feature type="binding site" evidence="1">
    <location>
        <begin position="77"/>
        <end position="84"/>
    </location>
    <ligand>
        <name>ATP</name>
        <dbReference type="ChEBI" id="CHEBI:30616"/>
    </ligand>
</feature>
<dbReference type="EMBL" id="CP000390">
    <property type="protein sequence ID" value="ABG62659.1"/>
    <property type="molecule type" value="Genomic_DNA"/>
</dbReference>
<dbReference type="SMR" id="Q11IW6"/>
<dbReference type="STRING" id="266779.Meso_1263"/>
<dbReference type="KEGG" id="mes:Meso_1263"/>
<dbReference type="eggNOG" id="COG0468">
    <property type="taxonomic scope" value="Bacteria"/>
</dbReference>
<dbReference type="HOGENOM" id="CLU_040469_3_2_5"/>
<dbReference type="OrthoDB" id="9776733at2"/>
<dbReference type="GO" id="GO:0005829">
    <property type="term" value="C:cytosol"/>
    <property type="evidence" value="ECO:0007669"/>
    <property type="project" value="TreeGrafter"/>
</dbReference>
<dbReference type="GO" id="GO:0005524">
    <property type="term" value="F:ATP binding"/>
    <property type="evidence" value="ECO:0007669"/>
    <property type="project" value="UniProtKB-UniRule"/>
</dbReference>
<dbReference type="GO" id="GO:0016887">
    <property type="term" value="F:ATP hydrolysis activity"/>
    <property type="evidence" value="ECO:0007669"/>
    <property type="project" value="InterPro"/>
</dbReference>
<dbReference type="GO" id="GO:0140664">
    <property type="term" value="F:ATP-dependent DNA damage sensor activity"/>
    <property type="evidence" value="ECO:0007669"/>
    <property type="project" value="InterPro"/>
</dbReference>
<dbReference type="GO" id="GO:0003684">
    <property type="term" value="F:damaged DNA binding"/>
    <property type="evidence" value="ECO:0007669"/>
    <property type="project" value="UniProtKB-UniRule"/>
</dbReference>
<dbReference type="GO" id="GO:0003697">
    <property type="term" value="F:single-stranded DNA binding"/>
    <property type="evidence" value="ECO:0007669"/>
    <property type="project" value="UniProtKB-UniRule"/>
</dbReference>
<dbReference type="GO" id="GO:0006310">
    <property type="term" value="P:DNA recombination"/>
    <property type="evidence" value="ECO:0007669"/>
    <property type="project" value="UniProtKB-UniRule"/>
</dbReference>
<dbReference type="GO" id="GO:0006281">
    <property type="term" value="P:DNA repair"/>
    <property type="evidence" value="ECO:0007669"/>
    <property type="project" value="UniProtKB-UniRule"/>
</dbReference>
<dbReference type="GO" id="GO:0009432">
    <property type="term" value="P:SOS response"/>
    <property type="evidence" value="ECO:0007669"/>
    <property type="project" value="UniProtKB-UniRule"/>
</dbReference>
<dbReference type="CDD" id="cd00983">
    <property type="entry name" value="RecA"/>
    <property type="match status" value="1"/>
</dbReference>
<dbReference type="FunFam" id="3.40.50.300:FF:000087">
    <property type="entry name" value="Recombinase RecA"/>
    <property type="match status" value="1"/>
</dbReference>
<dbReference type="Gene3D" id="3.40.50.300">
    <property type="entry name" value="P-loop containing nucleotide triphosphate hydrolases"/>
    <property type="match status" value="1"/>
</dbReference>
<dbReference type="HAMAP" id="MF_00268">
    <property type="entry name" value="RecA"/>
    <property type="match status" value="1"/>
</dbReference>
<dbReference type="InterPro" id="IPR003593">
    <property type="entry name" value="AAA+_ATPase"/>
</dbReference>
<dbReference type="InterPro" id="IPR013765">
    <property type="entry name" value="DNA_recomb/repair_RecA"/>
</dbReference>
<dbReference type="InterPro" id="IPR020584">
    <property type="entry name" value="DNA_recomb/repair_RecA_CS"/>
</dbReference>
<dbReference type="InterPro" id="IPR027417">
    <property type="entry name" value="P-loop_NTPase"/>
</dbReference>
<dbReference type="InterPro" id="IPR049261">
    <property type="entry name" value="RecA-like_C"/>
</dbReference>
<dbReference type="InterPro" id="IPR049428">
    <property type="entry name" value="RecA-like_N"/>
</dbReference>
<dbReference type="InterPro" id="IPR020588">
    <property type="entry name" value="RecA_ATP-bd"/>
</dbReference>
<dbReference type="InterPro" id="IPR023400">
    <property type="entry name" value="RecA_C_sf"/>
</dbReference>
<dbReference type="InterPro" id="IPR020587">
    <property type="entry name" value="RecA_monomer-monomer_interface"/>
</dbReference>
<dbReference type="NCBIfam" id="TIGR02012">
    <property type="entry name" value="tigrfam_recA"/>
    <property type="match status" value="1"/>
</dbReference>
<dbReference type="PANTHER" id="PTHR45900:SF1">
    <property type="entry name" value="MITOCHONDRIAL DNA REPAIR PROTEIN RECA HOMOLOG-RELATED"/>
    <property type="match status" value="1"/>
</dbReference>
<dbReference type="PANTHER" id="PTHR45900">
    <property type="entry name" value="RECA"/>
    <property type="match status" value="1"/>
</dbReference>
<dbReference type="Pfam" id="PF00154">
    <property type="entry name" value="RecA"/>
    <property type="match status" value="1"/>
</dbReference>
<dbReference type="Pfam" id="PF21096">
    <property type="entry name" value="RecA_C"/>
    <property type="match status" value="1"/>
</dbReference>
<dbReference type="PRINTS" id="PR00142">
    <property type="entry name" value="RECA"/>
</dbReference>
<dbReference type="SMART" id="SM00382">
    <property type="entry name" value="AAA"/>
    <property type="match status" value="1"/>
</dbReference>
<dbReference type="SUPFAM" id="SSF52540">
    <property type="entry name" value="P-loop containing nucleoside triphosphate hydrolases"/>
    <property type="match status" value="1"/>
</dbReference>
<dbReference type="SUPFAM" id="SSF54752">
    <property type="entry name" value="RecA protein, C-terminal domain"/>
    <property type="match status" value="1"/>
</dbReference>
<dbReference type="PROSITE" id="PS00321">
    <property type="entry name" value="RECA_1"/>
    <property type="match status" value="1"/>
</dbReference>
<dbReference type="PROSITE" id="PS50162">
    <property type="entry name" value="RECA_2"/>
    <property type="match status" value="1"/>
</dbReference>
<dbReference type="PROSITE" id="PS50163">
    <property type="entry name" value="RECA_3"/>
    <property type="match status" value="1"/>
</dbReference>
<reference key="1">
    <citation type="submission" date="2006-06" db="EMBL/GenBank/DDBJ databases">
        <title>Complete sequence of chromosome of Mesorhizobium sp. BNC1.</title>
        <authorList>
            <consortium name="US DOE Joint Genome Institute"/>
            <person name="Copeland A."/>
            <person name="Lucas S."/>
            <person name="Lapidus A."/>
            <person name="Barry K."/>
            <person name="Detter J.C."/>
            <person name="Glavina del Rio T."/>
            <person name="Hammon N."/>
            <person name="Israni S."/>
            <person name="Dalin E."/>
            <person name="Tice H."/>
            <person name="Pitluck S."/>
            <person name="Chertkov O."/>
            <person name="Brettin T."/>
            <person name="Bruce D."/>
            <person name="Han C."/>
            <person name="Tapia R."/>
            <person name="Gilna P."/>
            <person name="Schmutz J."/>
            <person name="Larimer F."/>
            <person name="Land M."/>
            <person name="Hauser L."/>
            <person name="Kyrpides N."/>
            <person name="Mikhailova N."/>
            <person name="Richardson P."/>
        </authorList>
    </citation>
    <scope>NUCLEOTIDE SEQUENCE [LARGE SCALE GENOMIC DNA]</scope>
    <source>
        <strain>BNC1</strain>
    </source>
</reference>